<feature type="chain" id="PRO_0000335396" description="Ribosomal RNA small subunit methyltransferase G">
    <location>
        <begin position="1"/>
        <end position="221"/>
    </location>
</feature>
<feature type="binding site" evidence="1">
    <location>
        <position position="90"/>
    </location>
    <ligand>
        <name>S-adenosyl-L-methionine</name>
        <dbReference type="ChEBI" id="CHEBI:59789"/>
    </ligand>
</feature>
<feature type="binding site" evidence="1">
    <location>
        <position position="95"/>
    </location>
    <ligand>
        <name>S-adenosyl-L-methionine</name>
        <dbReference type="ChEBI" id="CHEBI:59789"/>
    </ligand>
</feature>
<feature type="binding site" evidence="1">
    <location>
        <begin position="141"/>
        <end position="142"/>
    </location>
    <ligand>
        <name>S-adenosyl-L-methionine</name>
        <dbReference type="ChEBI" id="CHEBI:59789"/>
    </ligand>
</feature>
<feature type="binding site" evidence="1">
    <location>
        <position position="154"/>
    </location>
    <ligand>
        <name>S-adenosyl-L-methionine</name>
        <dbReference type="ChEBI" id="CHEBI:59789"/>
    </ligand>
</feature>
<keyword id="KW-0963">Cytoplasm</keyword>
<keyword id="KW-0489">Methyltransferase</keyword>
<keyword id="KW-1185">Reference proteome</keyword>
<keyword id="KW-0698">rRNA processing</keyword>
<keyword id="KW-0949">S-adenosyl-L-methionine</keyword>
<keyword id="KW-0808">Transferase</keyword>
<proteinExistence type="inferred from homology"/>
<organism>
    <name type="scientific">Polaromonas naphthalenivorans (strain CJ2)</name>
    <dbReference type="NCBI Taxonomy" id="365044"/>
    <lineage>
        <taxon>Bacteria</taxon>
        <taxon>Pseudomonadati</taxon>
        <taxon>Pseudomonadota</taxon>
        <taxon>Betaproteobacteria</taxon>
        <taxon>Burkholderiales</taxon>
        <taxon>Comamonadaceae</taxon>
        <taxon>Polaromonas</taxon>
    </lineage>
</organism>
<name>RSMG_POLNA</name>
<evidence type="ECO:0000255" key="1">
    <source>
        <dbReference type="HAMAP-Rule" id="MF_00074"/>
    </source>
</evidence>
<protein>
    <recommendedName>
        <fullName evidence="1">Ribosomal RNA small subunit methyltransferase G</fullName>
        <ecNumber evidence="1">2.1.1.170</ecNumber>
    </recommendedName>
    <alternativeName>
        <fullName evidence="1">16S rRNA 7-methylguanosine methyltransferase</fullName>
        <shortName evidence="1">16S rRNA m7G methyltransferase</shortName>
    </alternativeName>
</protein>
<dbReference type="EC" id="2.1.1.170" evidence="1"/>
<dbReference type="EMBL" id="CP000529">
    <property type="protein sequence ID" value="ABM35390.1"/>
    <property type="molecule type" value="Genomic_DNA"/>
</dbReference>
<dbReference type="SMR" id="A1VIB2"/>
<dbReference type="STRING" id="365044.Pnap_0064"/>
<dbReference type="KEGG" id="pna:Pnap_0064"/>
<dbReference type="eggNOG" id="COG0357">
    <property type="taxonomic scope" value="Bacteria"/>
</dbReference>
<dbReference type="HOGENOM" id="CLU_065341_2_0_4"/>
<dbReference type="OrthoDB" id="9808773at2"/>
<dbReference type="Proteomes" id="UP000000644">
    <property type="component" value="Chromosome"/>
</dbReference>
<dbReference type="GO" id="GO:0005829">
    <property type="term" value="C:cytosol"/>
    <property type="evidence" value="ECO:0007669"/>
    <property type="project" value="TreeGrafter"/>
</dbReference>
<dbReference type="GO" id="GO:0070043">
    <property type="term" value="F:rRNA (guanine-N7-)-methyltransferase activity"/>
    <property type="evidence" value="ECO:0007669"/>
    <property type="project" value="UniProtKB-UniRule"/>
</dbReference>
<dbReference type="CDD" id="cd02440">
    <property type="entry name" value="AdoMet_MTases"/>
    <property type="match status" value="1"/>
</dbReference>
<dbReference type="Gene3D" id="3.40.50.150">
    <property type="entry name" value="Vaccinia Virus protein VP39"/>
    <property type="match status" value="1"/>
</dbReference>
<dbReference type="HAMAP" id="MF_00074">
    <property type="entry name" value="16SrRNA_methyltr_G"/>
    <property type="match status" value="1"/>
</dbReference>
<dbReference type="InterPro" id="IPR003682">
    <property type="entry name" value="rRNA_ssu_MeTfrase_G"/>
</dbReference>
<dbReference type="InterPro" id="IPR029063">
    <property type="entry name" value="SAM-dependent_MTases_sf"/>
</dbReference>
<dbReference type="NCBIfam" id="TIGR00138">
    <property type="entry name" value="rsmG_gidB"/>
    <property type="match status" value="1"/>
</dbReference>
<dbReference type="PANTHER" id="PTHR31760">
    <property type="entry name" value="S-ADENOSYL-L-METHIONINE-DEPENDENT METHYLTRANSFERASES SUPERFAMILY PROTEIN"/>
    <property type="match status" value="1"/>
</dbReference>
<dbReference type="PANTHER" id="PTHR31760:SF0">
    <property type="entry name" value="S-ADENOSYL-L-METHIONINE-DEPENDENT METHYLTRANSFERASES SUPERFAMILY PROTEIN"/>
    <property type="match status" value="1"/>
</dbReference>
<dbReference type="Pfam" id="PF02527">
    <property type="entry name" value="GidB"/>
    <property type="match status" value="1"/>
</dbReference>
<dbReference type="PIRSF" id="PIRSF003078">
    <property type="entry name" value="GidB"/>
    <property type="match status" value="1"/>
</dbReference>
<dbReference type="SUPFAM" id="SSF53335">
    <property type="entry name" value="S-adenosyl-L-methionine-dependent methyltransferases"/>
    <property type="match status" value="1"/>
</dbReference>
<gene>
    <name evidence="1" type="primary">rsmG</name>
    <name type="ordered locus">Pnap_0064</name>
</gene>
<sequence length="221" mass="23993">MAATEQNLRSTLKVGLEALQLQLSEQQINQLLAYQAMIAKWTQVYNLTSVRDPAEMMTHHLLDSLAAVPALQRYLHRSGLEQGSRLLDVGSGAGLPGVVIAICCPQVAVTCVDTVAKKAAFIKQAALALRLPNLTGLHARVESITESFDVICSRAFASLADFTKWSAGALAPQGVWMAMKGKHPADELLALPENIAMFHVEQLKVPGLDAERCILWLRPVS</sequence>
<accession>A1VIB2</accession>
<reference key="1">
    <citation type="journal article" date="2009" name="Environ. Microbiol.">
        <title>The genome of Polaromonas naphthalenivorans strain CJ2, isolated from coal tar-contaminated sediment, reveals physiological and metabolic versatility and evolution through extensive horizontal gene transfer.</title>
        <authorList>
            <person name="Yagi J.M."/>
            <person name="Sims D."/>
            <person name="Brettin T."/>
            <person name="Bruce D."/>
            <person name="Madsen E.L."/>
        </authorList>
    </citation>
    <scope>NUCLEOTIDE SEQUENCE [LARGE SCALE GENOMIC DNA]</scope>
    <source>
        <strain>CJ2</strain>
    </source>
</reference>
<comment type="function">
    <text evidence="1">Specifically methylates the N7 position of guanine in position 527 of 16S rRNA.</text>
</comment>
<comment type="catalytic activity">
    <reaction evidence="1">
        <text>guanosine(527) in 16S rRNA + S-adenosyl-L-methionine = N(7)-methylguanosine(527) in 16S rRNA + S-adenosyl-L-homocysteine</text>
        <dbReference type="Rhea" id="RHEA:42732"/>
        <dbReference type="Rhea" id="RHEA-COMP:10209"/>
        <dbReference type="Rhea" id="RHEA-COMP:10210"/>
        <dbReference type="ChEBI" id="CHEBI:57856"/>
        <dbReference type="ChEBI" id="CHEBI:59789"/>
        <dbReference type="ChEBI" id="CHEBI:74269"/>
        <dbReference type="ChEBI" id="CHEBI:74480"/>
        <dbReference type="EC" id="2.1.1.170"/>
    </reaction>
</comment>
<comment type="subcellular location">
    <subcellularLocation>
        <location evidence="1">Cytoplasm</location>
    </subcellularLocation>
</comment>
<comment type="similarity">
    <text evidence="1">Belongs to the methyltransferase superfamily. RNA methyltransferase RsmG family.</text>
</comment>